<gene>
    <name type="primary">tim50</name>
    <name type="ORF">AFUA_2G03420</name>
</gene>
<sequence>MDSAARPVSFPKSRWYAKSSKPKAPYKLPESVKPPQSEQPSSTPKPEYSAEQTEFDTKADPAGNAAPEASEATESKPQQPLPDLTQGIPSTLAAELEGRTKKSGQTSLNLTEDPSRFEDYTDDGRGDIPKDGYVSSLDRRRARMANLMYAFFLLAGAGGVAYLGRNWETEEEAKAHPDIPSGWSFSSWYNRMKARLSDITSYYKDPAFPKLLPDEDPNLRQPYTLVLSLEDLLVHSEWSREHGWRIAKRPGVDYFLRYLNQYYELVLFTSVPSMMADQVLRKLDPYRIIRWPLFREATRYKDGEYIKDLSYLNRDLSKVILIDTKEEHARLQPENAIILDKWLGDPKDKNLVALIPFLEYIAGMGVEDVRPVLKSFEGTSIPVEFAKRERIMREKFEKELEEERKRRPKRGVGSLASALGLKSTRTLDGEQSPSEGLAQGKMLWDQIRERGQKNYEMIEKEIRENGEKWLAEMAAEEEKARQEQMKMMKGSFTSMFGAGKQ</sequence>
<evidence type="ECO:0000250" key="1"/>
<evidence type="ECO:0000255" key="2"/>
<evidence type="ECO:0000255" key="3">
    <source>
        <dbReference type="PROSITE-ProRule" id="PRU00336"/>
    </source>
</evidence>
<evidence type="ECO:0000256" key="4">
    <source>
        <dbReference type="SAM" id="MobiDB-lite"/>
    </source>
</evidence>
<evidence type="ECO:0000305" key="5"/>
<proteinExistence type="inferred from homology"/>
<dbReference type="EMBL" id="AAHF01000008">
    <property type="protein sequence ID" value="EAL87439.1"/>
    <property type="status" value="ALT_INIT"/>
    <property type="molecule type" value="Genomic_DNA"/>
</dbReference>
<dbReference type="RefSeq" id="XP_749477.1">
    <property type="nucleotide sequence ID" value="XM_744384.1"/>
</dbReference>
<dbReference type="SMR" id="Q4WI16"/>
<dbReference type="FunCoup" id="Q4WI16">
    <property type="interactions" value="444"/>
</dbReference>
<dbReference type="STRING" id="330879.Q4WI16"/>
<dbReference type="GeneID" id="3507050"/>
<dbReference type="KEGG" id="afm:AFUA_2G03420"/>
<dbReference type="eggNOG" id="KOG2832">
    <property type="taxonomic scope" value="Eukaryota"/>
</dbReference>
<dbReference type="HOGENOM" id="CLU_023309_0_0_1"/>
<dbReference type="InParanoid" id="Q4WI16"/>
<dbReference type="OrthoDB" id="287041at2759"/>
<dbReference type="Proteomes" id="UP000002530">
    <property type="component" value="Chromosome 2"/>
</dbReference>
<dbReference type="GO" id="GO:0005744">
    <property type="term" value="C:TIM23 mitochondrial import inner membrane translocase complex"/>
    <property type="evidence" value="ECO:0000318"/>
    <property type="project" value="GO_Central"/>
</dbReference>
<dbReference type="GO" id="GO:0030150">
    <property type="term" value="P:protein import into mitochondrial matrix"/>
    <property type="evidence" value="ECO:0000318"/>
    <property type="project" value="GO_Central"/>
</dbReference>
<dbReference type="CDD" id="cd07521">
    <property type="entry name" value="HAD_FCP1-like"/>
    <property type="match status" value="1"/>
</dbReference>
<dbReference type="FunFam" id="3.40.50.1000:FF:000019">
    <property type="entry name" value="Mitochondrial import inner membrane translocase subunit TIM50"/>
    <property type="match status" value="1"/>
</dbReference>
<dbReference type="Gene3D" id="3.40.50.1000">
    <property type="entry name" value="HAD superfamily/HAD-like"/>
    <property type="match status" value="1"/>
</dbReference>
<dbReference type="InterPro" id="IPR004274">
    <property type="entry name" value="FCP1_dom"/>
</dbReference>
<dbReference type="InterPro" id="IPR036412">
    <property type="entry name" value="HAD-like_sf"/>
</dbReference>
<dbReference type="InterPro" id="IPR023214">
    <property type="entry name" value="HAD_sf"/>
</dbReference>
<dbReference type="InterPro" id="IPR050365">
    <property type="entry name" value="TIM50"/>
</dbReference>
<dbReference type="PANTHER" id="PTHR12210">
    <property type="entry name" value="DULLARD PROTEIN PHOSPHATASE"/>
    <property type="match status" value="1"/>
</dbReference>
<dbReference type="Pfam" id="PF03031">
    <property type="entry name" value="NIF"/>
    <property type="match status" value="1"/>
</dbReference>
<dbReference type="SMART" id="SM00577">
    <property type="entry name" value="CPDc"/>
    <property type="match status" value="1"/>
</dbReference>
<dbReference type="SUPFAM" id="SSF56784">
    <property type="entry name" value="HAD-like"/>
    <property type="match status" value="1"/>
</dbReference>
<dbReference type="PROSITE" id="PS50969">
    <property type="entry name" value="FCP1"/>
    <property type="match status" value="1"/>
</dbReference>
<comment type="function">
    <text evidence="1">Essential component of the TIM23 complex, a complex that mediates the translocation of transit peptide-containing proteins across the mitochondrial inner membrane. Required to direct preproteins in transit and direct them to the channel protein TIM23, and possibly facilitates transfer of the translocating proteins from the TOM complex to the TIM23 complex (By similarity).</text>
</comment>
<comment type="subunit">
    <text evidence="1">Component of the TIM23 complex, at least composed of TIM23/timX, TIM17/timQ, tim50 and TIM21/timU. Interacts with preproteins in transit (By similarity).</text>
</comment>
<comment type="subcellular location">
    <subcellularLocation>
        <location evidence="1">Mitochondrion inner membrane</location>
        <topology evidence="1">Single-pass membrane protein</topology>
    </subcellularLocation>
</comment>
<comment type="similarity">
    <text evidence="5">Belongs to the TIM50 family.</text>
</comment>
<comment type="sequence caution" evidence="5">
    <conflict type="erroneous initiation">
        <sequence resource="EMBL-CDS" id="EAL87439"/>
    </conflict>
</comment>
<name>TIM50_ASPFU</name>
<feature type="transit peptide" description="Mitochondrion" evidence="2">
    <location>
        <begin position="1"/>
        <end position="16"/>
    </location>
</feature>
<feature type="chain" id="PRO_0000043126" description="Mitochondrial import inner membrane translocase subunit tim50">
    <location>
        <begin position="17"/>
        <end position="501"/>
    </location>
</feature>
<feature type="topological domain" description="Mitochondrial matrix" evidence="2">
    <location>
        <begin position="17"/>
        <end position="146"/>
    </location>
</feature>
<feature type="transmembrane region" description="Helical" evidence="2">
    <location>
        <begin position="147"/>
        <end position="164"/>
    </location>
</feature>
<feature type="topological domain" description="Mitochondrial intermembrane" evidence="2">
    <location>
        <begin position="165"/>
        <end position="501"/>
    </location>
</feature>
<feature type="domain" description="FCP1 homology" evidence="3">
    <location>
        <begin position="218"/>
        <end position="361"/>
    </location>
</feature>
<feature type="region of interest" description="Disordered" evidence="4">
    <location>
        <begin position="1"/>
        <end position="125"/>
    </location>
</feature>
<feature type="region of interest" description="Disordered" evidence="4">
    <location>
        <begin position="423"/>
        <end position="442"/>
    </location>
</feature>
<feature type="compositionally biased region" description="Polar residues" evidence="4">
    <location>
        <begin position="34"/>
        <end position="44"/>
    </location>
</feature>
<feature type="compositionally biased region" description="Polar residues" evidence="4">
    <location>
        <begin position="103"/>
        <end position="112"/>
    </location>
</feature>
<feature type="compositionally biased region" description="Basic and acidic residues" evidence="4">
    <location>
        <begin position="113"/>
        <end position="125"/>
    </location>
</feature>
<feature type="compositionally biased region" description="Polar residues" evidence="4">
    <location>
        <begin position="423"/>
        <end position="434"/>
    </location>
</feature>
<protein>
    <recommendedName>
        <fullName>Mitochondrial import inner membrane translocase subunit tim50</fullName>
    </recommendedName>
</protein>
<accession>Q4WI16</accession>
<organism>
    <name type="scientific">Aspergillus fumigatus (strain ATCC MYA-4609 / CBS 101355 / FGSC A1100 / Af293)</name>
    <name type="common">Neosartorya fumigata</name>
    <dbReference type="NCBI Taxonomy" id="330879"/>
    <lineage>
        <taxon>Eukaryota</taxon>
        <taxon>Fungi</taxon>
        <taxon>Dikarya</taxon>
        <taxon>Ascomycota</taxon>
        <taxon>Pezizomycotina</taxon>
        <taxon>Eurotiomycetes</taxon>
        <taxon>Eurotiomycetidae</taxon>
        <taxon>Eurotiales</taxon>
        <taxon>Aspergillaceae</taxon>
        <taxon>Aspergillus</taxon>
        <taxon>Aspergillus subgen. Fumigati</taxon>
    </lineage>
</organism>
<reference key="1">
    <citation type="journal article" date="2005" name="Nature">
        <title>Genomic sequence of the pathogenic and allergenic filamentous fungus Aspergillus fumigatus.</title>
        <authorList>
            <person name="Nierman W.C."/>
            <person name="Pain A."/>
            <person name="Anderson M.J."/>
            <person name="Wortman J.R."/>
            <person name="Kim H.S."/>
            <person name="Arroyo J."/>
            <person name="Berriman M."/>
            <person name="Abe K."/>
            <person name="Archer D.B."/>
            <person name="Bermejo C."/>
            <person name="Bennett J.W."/>
            <person name="Bowyer P."/>
            <person name="Chen D."/>
            <person name="Collins M."/>
            <person name="Coulsen R."/>
            <person name="Davies R."/>
            <person name="Dyer P.S."/>
            <person name="Farman M.L."/>
            <person name="Fedorova N."/>
            <person name="Fedorova N.D."/>
            <person name="Feldblyum T.V."/>
            <person name="Fischer R."/>
            <person name="Fosker N."/>
            <person name="Fraser A."/>
            <person name="Garcia J.L."/>
            <person name="Garcia M.J."/>
            <person name="Goble A."/>
            <person name="Goldman G.H."/>
            <person name="Gomi K."/>
            <person name="Griffith-Jones S."/>
            <person name="Gwilliam R."/>
            <person name="Haas B.J."/>
            <person name="Haas H."/>
            <person name="Harris D.E."/>
            <person name="Horiuchi H."/>
            <person name="Huang J."/>
            <person name="Humphray S."/>
            <person name="Jimenez J."/>
            <person name="Keller N."/>
            <person name="Khouri H."/>
            <person name="Kitamoto K."/>
            <person name="Kobayashi T."/>
            <person name="Konzack S."/>
            <person name="Kulkarni R."/>
            <person name="Kumagai T."/>
            <person name="Lafton A."/>
            <person name="Latge J.-P."/>
            <person name="Li W."/>
            <person name="Lord A."/>
            <person name="Lu C."/>
            <person name="Majoros W.H."/>
            <person name="May G.S."/>
            <person name="Miller B.L."/>
            <person name="Mohamoud Y."/>
            <person name="Molina M."/>
            <person name="Monod M."/>
            <person name="Mouyna I."/>
            <person name="Mulligan S."/>
            <person name="Murphy L.D."/>
            <person name="O'Neil S."/>
            <person name="Paulsen I."/>
            <person name="Penalva M.A."/>
            <person name="Pertea M."/>
            <person name="Price C."/>
            <person name="Pritchard B.L."/>
            <person name="Quail M.A."/>
            <person name="Rabbinowitsch E."/>
            <person name="Rawlins N."/>
            <person name="Rajandream M.A."/>
            <person name="Reichard U."/>
            <person name="Renauld H."/>
            <person name="Robson G.D."/>
            <person name="Rodriguez de Cordoba S."/>
            <person name="Rodriguez-Pena J.M."/>
            <person name="Ronning C.M."/>
            <person name="Rutter S."/>
            <person name="Salzberg S.L."/>
            <person name="Sanchez M."/>
            <person name="Sanchez-Ferrero J.C."/>
            <person name="Saunders D."/>
            <person name="Seeger K."/>
            <person name="Squares R."/>
            <person name="Squares S."/>
            <person name="Takeuchi M."/>
            <person name="Tekaia F."/>
            <person name="Turner G."/>
            <person name="Vazquez de Aldana C.R."/>
            <person name="Weidman J."/>
            <person name="White O."/>
            <person name="Woodward J.R."/>
            <person name="Yu J.-H."/>
            <person name="Fraser C.M."/>
            <person name="Galagan J.E."/>
            <person name="Asai K."/>
            <person name="Machida M."/>
            <person name="Hall N."/>
            <person name="Barrell B.G."/>
            <person name="Denning D.W."/>
        </authorList>
    </citation>
    <scope>NUCLEOTIDE SEQUENCE [LARGE SCALE GENOMIC DNA]</scope>
    <source>
        <strain>ATCC MYA-4609 / CBS 101355 / FGSC A1100 / Af293</strain>
    </source>
</reference>
<keyword id="KW-0472">Membrane</keyword>
<keyword id="KW-0496">Mitochondrion</keyword>
<keyword id="KW-0999">Mitochondrion inner membrane</keyword>
<keyword id="KW-0653">Protein transport</keyword>
<keyword id="KW-1185">Reference proteome</keyword>
<keyword id="KW-0809">Transit peptide</keyword>
<keyword id="KW-0811">Translocation</keyword>
<keyword id="KW-0812">Transmembrane</keyword>
<keyword id="KW-1133">Transmembrane helix</keyword>
<keyword id="KW-0813">Transport</keyword>